<reference key="1">
    <citation type="submission" date="2007-11" db="EMBL/GenBank/DDBJ databases">
        <authorList>
            <consortium name="The Salmonella enterica serovar Paratyphi B Genome Sequencing Project"/>
            <person name="McClelland M."/>
            <person name="Sanderson E.K."/>
            <person name="Porwollik S."/>
            <person name="Spieth J."/>
            <person name="Clifton W.S."/>
            <person name="Fulton R."/>
            <person name="Cordes M."/>
            <person name="Wollam A."/>
            <person name="Shah N."/>
            <person name="Pepin K."/>
            <person name="Bhonagiri V."/>
            <person name="Nash W."/>
            <person name="Johnson M."/>
            <person name="Thiruvilangam P."/>
            <person name="Wilson R."/>
        </authorList>
    </citation>
    <scope>NUCLEOTIDE SEQUENCE [LARGE SCALE GENOMIC DNA]</scope>
    <source>
        <strain>ATCC BAA-1250 / SPB7</strain>
    </source>
</reference>
<proteinExistence type="inferred from homology"/>
<sequence>METTKPSFQDVLEFVRLFRRKNKLQREIQDIEKKIRDNQKRVLLLDNLSDYIKPGMSVEAIQGIIASMKSDYEDRVDDYIIKNAEISKERRDISKKLKAMGEMKHADVKAE</sequence>
<dbReference type="EMBL" id="CP000886">
    <property type="protein sequence ID" value="ABX66466.1"/>
    <property type="molecule type" value="Genomic_DNA"/>
</dbReference>
<dbReference type="RefSeq" id="WP_000450405.1">
    <property type="nucleotide sequence ID" value="NC_010102.1"/>
</dbReference>
<dbReference type="SMR" id="A9MSK6"/>
<dbReference type="KEGG" id="spq:SPAB_01045"/>
<dbReference type="PATRIC" id="fig|1016998.12.peg.986"/>
<dbReference type="HOGENOM" id="CLU_153146_0_0_6"/>
<dbReference type="BioCyc" id="SENT1016998:SPAB_RS04350-MONOMER"/>
<dbReference type="Proteomes" id="UP000008556">
    <property type="component" value="Chromosome"/>
</dbReference>
<dbReference type="GO" id="GO:0005829">
    <property type="term" value="C:cytosol"/>
    <property type="evidence" value="ECO:0007669"/>
    <property type="project" value="TreeGrafter"/>
</dbReference>
<dbReference type="HAMAP" id="MF_00683">
    <property type="entry name" value="Pole_loc_TmaR"/>
    <property type="match status" value="1"/>
</dbReference>
<dbReference type="InterPro" id="IPR007458">
    <property type="entry name" value="DUF496"/>
</dbReference>
<dbReference type="InterPro" id="IPR053375">
    <property type="entry name" value="UPF0265"/>
</dbReference>
<dbReference type="NCBIfam" id="NF003844">
    <property type="entry name" value="PRK05423.1"/>
    <property type="match status" value="1"/>
</dbReference>
<dbReference type="NCBIfam" id="NF040881">
    <property type="entry name" value="PTS_reg_TmaR"/>
    <property type="match status" value="1"/>
</dbReference>
<dbReference type="PANTHER" id="PTHR39591">
    <property type="entry name" value="UPF0265 PROTEIN YEEX"/>
    <property type="match status" value="1"/>
</dbReference>
<dbReference type="PANTHER" id="PTHR39591:SF1">
    <property type="entry name" value="UPF0265 PROTEIN YEEX"/>
    <property type="match status" value="1"/>
</dbReference>
<dbReference type="Pfam" id="PF04363">
    <property type="entry name" value="DUF496"/>
    <property type="match status" value="1"/>
</dbReference>
<dbReference type="PIRSF" id="PIRSF028773">
    <property type="entry name" value="UCP028773"/>
    <property type="match status" value="1"/>
</dbReference>
<name>TMAR_SALPB</name>
<comment type="function">
    <text evidence="1">Pole-localizer protein involved in the regulation of several cellular processes.</text>
</comment>
<comment type="subcellular location">
    <subcellularLocation>
        <location evidence="1">Cytoplasm</location>
    </subcellularLocation>
    <text evidence="1">Forms clusters that localize mainly near one pole of the cell.</text>
</comment>
<comment type="similarity">
    <text evidence="1">Belongs to the pole-localizer TmaR family.</text>
</comment>
<accession>A9MSK6</accession>
<gene>
    <name evidence="1" type="primary">tmaR</name>
    <name type="ordered locus">SPAB_01045</name>
</gene>
<protein>
    <recommendedName>
        <fullName evidence="1">Pole-localizer protein TmaR</fullName>
    </recommendedName>
</protein>
<feature type="chain" id="PRO_1000083060" description="Pole-localizer protein TmaR">
    <location>
        <begin position="1"/>
        <end position="111"/>
    </location>
</feature>
<feature type="coiled-coil region" evidence="1">
    <location>
        <begin position="14"/>
        <end position="41"/>
    </location>
</feature>
<keyword id="KW-0175">Coiled coil</keyword>
<keyword id="KW-0963">Cytoplasm</keyword>
<evidence type="ECO:0000255" key="1">
    <source>
        <dbReference type="HAMAP-Rule" id="MF_00683"/>
    </source>
</evidence>
<organism>
    <name type="scientific">Salmonella paratyphi B (strain ATCC BAA-1250 / SPB7)</name>
    <dbReference type="NCBI Taxonomy" id="1016998"/>
    <lineage>
        <taxon>Bacteria</taxon>
        <taxon>Pseudomonadati</taxon>
        <taxon>Pseudomonadota</taxon>
        <taxon>Gammaproteobacteria</taxon>
        <taxon>Enterobacterales</taxon>
        <taxon>Enterobacteriaceae</taxon>
        <taxon>Salmonella</taxon>
    </lineage>
</organism>